<feature type="chain" id="PRO_0000226397" description="Small ribosomal subunit protein uS12">
    <location>
        <begin position="1"/>
        <end position="123"/>
    </location>
</feature>
<feature type="region of interest" description="Disordered" evidence="3">
    <location>
        <begin position="104"/>
        <end position="123"/>
    </location>
</feature>
<feature type="compositionally biased region" description="Basic residues" evidence="3">
    <location>
        <begin position="113"/>
        <end position="123"/>
    </location>
</feature>
<feature type="modified residue" description="3-methylthioaspartic acid" evidence="1">
    <location>
        <position position="89"/>
    </location>
</feature>
<gene>
    <name evidence="2" type="primary">rpsL</name>
    <name type="ordered locus">NGO_1845</name>
</gene>
<proteinExistence type="inferred from homology"/>
<organism>
    <name type="scientific">Neisseria gonorrhoeae (strain ATCC 700825 / FA 1090)</name>
    <dbReference type="NCBI Taxonomy" id="242231"/>
    <lineage>
        <taxon>Bacteria</taxon>
        <taxon>Pseudomonadati</taxon>
        <taxon>Pseudomonadota</taxon>
        <taxon>Betaproteobacteria</taxon>
        <taxon>Neisseriales</taxon>
        <taxon>Neisseriaceae</taxon>
        <taxon>Neisseria</taxon>
    </lineage>
</organism>
<name>RS12_NEIG1</name>
<accession>Q5F5S1</accession>
<comment type="function">
    <text evidence="2">With S4 and S5 plays an important role in translational accuracy.</text>
</comment>
<comment type="function">
    <text evidence="2">Interacts with and stabilizes bases of the 16S rRNA that are involved in tRNA selection in the A site and with the mRNA backbone. Located at the interface of the 30S and 50S subunits, it traverses the body of the 30S subunit contacting proteins on the other side and probably holding the rRNA structure together. The combined cluster of proteins S8, S12 and S17 appears to hold together the shoulder and platform of the 30S subunit.</text>
</comment>
<comment type="subunit">
    <text evidence="2">Part of the 30S ribosomal subunit. Contacts proteins S8 and S17. May interact with IF1 in the 30S initiation complex.</text>
</comment>
<comment type="similarity">
    <text evidence="2">Belongs to the universal ribosomal protein uS12 family.</text>
</comment>
<evidence type="ECO:0000250" key="1"/>
<evidence type="ECO:0000255" key="2">
    <source>
        <dbReference type="HAMAP-Rule" id="MF_00403"/>
    </source>
</evidence>
<evidence type="ECO:0000256" key="3">
    <source>
        <dbReference type="SAM" id="MobiDB-lite"/>
    </source>
</evidence>
<evidence type="ECO:0000305" key="4"/>
<reference key="1">
    <citation type="submission" date="2003-03" db="EMBL/GenBank/DDBJ databases">
        <title>The complete genome sequence of Neisseria gonorrhoeae.</title>
        <authorList>
            <person name="Lewis L.A."/>
            <person name="Gillaspy A.F."/>
            <person name="McLaughlin R.E."/>
            <person name="Gipson M."/>
            <person name="Ducey T.F."/>
            <person name="Ownbey T."/>
            <person name="Hartman K."/>
            <person name="Nydick C."/>
            <person name="Carson M.B."/>
            <person name="Vaughn J."/>
            <person name="Thomson C."/>
            <person name="Song L."/>
            <person name="Lin S."/>
            <person name="Yuan X."/>
            <person name="Najar F."/>
            <person name="Zhan M."/>
            <person name="Ren Q."/>
            <person name="Zhu H."/>
            <person name="Qi S."/>
            <person name="Kenton S.M."/>
            <person name="Lai H."/>
            <person name="White J.D."/>
            <person name="Clifton S."/>
            <person name="Roe B.A."/>
            <person name="Dyer D.W."/>
        </authorList>
    </citation>
    <scope>NUCLEOTIDE SEQUENCE [LARGE SCALE GENOMIC DNA]</scope>
    <source>
        <strain>ATCC 700825 / FA 1090</strain>
    </source>
</reference>
<sequence>MPTINQLVRKGRQKPVYVNKVPALEACPQKRGVCTRVYTTTPRKPNSALRKVCKVRLTNGFEVISYIGGEGHNLQEHSVVLIRGGRVKDLPGVRYHTVRGSLDTAGVKDRKQARSKYGAKRPK</sequence>
<keyword id="KW-0488">Methylation</keyword>
<keyword id="KW-1185">Reference proteome</keyword>
<keyword id="KW-0687">Ribonucleoprotein</keyword>
<keyword id="KW-0689">Ribosomal protein</keyword>
<keyword id="KW-0694">RNA-binding</keyword>
<keyword id="KW-0699">rRNA-binding</keyword>
<keyword id="KW-0820">tRNA-binding</keyword>
<protein>
    <recommendedName>
        <fullName evidence="2">Small ribosomal subunit protein uS12</fullName>
    </recommendedName>
    <alternativeName>
        <fullName evidence="4">30S ribosomal protein S12</fullName>
    </alternativeName>
</protein>
<dbReference type="EMBL" id="AE004969">
    <property type="protein sequence ID" value="AAW90466.1"/>
    <property type="molecule type" value="Genomic_DNA"/>
</dbReference>
<dbReference type="RefSeq" id="WP_003690100.1">
    <property type="nucleotide sequence ID" value="NC_002946.2"/>
</dbReference>
<dbReference type="RefSeq" id="YP_208878.1">
    <property type="nucleotide sequence ID" value="NC_002946.2"/>
</dbReference>
<dbReference type="SMR" id="Q5F5S1"/>
<dbReference type="STRING" id="242231.NGO_1845"/>
<dbReference type="KEGG" id="ngo:NGO_1845"/>
<dbReference type="PATRIC" id="fig|242231.10.peg.2217"/>
<dbReference type="HOGENOM" id="CLU_104295_1_2_4"/>
<dbReference type="Proteomes" id="UP000000535">
    <property type="component" value="Chromosome"/>
</dbReference>
<dbReference type="GO" id="GO:0015935">
    <property type="term" value="C:small ribosomal subunit"/>
    <property type="evidence" value="ECO:0007669"/>
    <property type="project" value="InterPro"/>
</dbReference>
<dbReference type="GO" id="GO:0019843">
    <property type="term" value="F:rRNA binding"/>
    <property type="evidence" value="ECO:0007669"/>
    <property type="project" value="UniProtKB-UniRule"/>
</dbReference>
<dbReference type="GO" id="GO:0003735">
    <property type="term" value="F:structural constituent of ribosome"/>
    <property type="evidence" value="ECO:0007669"/>
    <property type="project" value="InterPro"/>
</dbReference>
<dbReference type="GO" id="GO:0000049">
    <property type="term" value="F:tRNA binding"/>
    <property type="evidence" value="ECO:0007669"/>
    <property type="project" value="UniProtKB-UniRule"/>
</dbReference>
<dbReference type="GO" id="GO:0006412">
    <property type="term" value="P:translation"/>
    <property type="evidence" value="ECO:0007669"/>
    <property type="project" value="UniProtKB-UniRule"/>
</dbReference>
<dbReference type="CDD" id="cd03368">
    <property type="entry name" value="Ribosomal_S12"/>
    <property type="match status" value="1"/>
</dbReference>
<dbReference type="FunFam" id="2.40.50.140:FF:000001">
    <property type="entry name" value="30S ribosomal protein S12"/>
    <property type="match status" value="1"/>
</dbReference>
<dbReference type="Gene3D" id="2.40.50.140">
    <property type="entry name" value="Nucleic acid-binding proteins"/>
    <property type="match status" value="1"/>
</dbReference>
<dbReference type="HAMAP" id="MF_00403_B">
    <property type="entry name" value="Ribosomal_uS12_B"/>
    <property type="match status" value="1"/>
</dbReference>
<dbReference type="InterPro" id="IPR012340">
    <property type="entry name" value="NA-bd_OB-fold"/>
</dbReference>
<dbReference type="InterPro" id="IPR006032">
    <property type="entry name" value="Ribosomal_uS12"/>
</dbReference>
<dbReference type="InterPro" id="IPR005679">
    <property type="entry name" value="Ribosomal_uS12_bac"/>
</dbReference>
<dbReference type="NCBIfam" id="TIGR00981">
    <property type="entry name" value="rpsL_bact"/>
    <property type="match status" value="1"/>
</dbReference>
<dbReference type="PANTHER" id="PTHR11652">
    <property type="entry name" value="30S RIBOSOMAL PROTEIN S12 FAMILY MEMBER"/>
    <property type="match status" value="1"/>
</dbReference>
<dbReference type="Pfam" id="PF00164">
    <property type="entry name" value="Ribosom_S12_S23"/>
    <property type="match status" value="1"/>
</dbReference>
<dbReference type="PIRSF" id="PIRSF002133">
    <property type="entry name" value="Ribosomal_S12/S23"/>
    <property type="match status" value="1"/>
</dbReference>
<dbReference type="PRINTS" id="PR01034">
    <property type="entry name" value="RIBOSOMALS12"/>
</dbReference>
<dbReference type="SUPFAM" id="SSF50249">
    <property type="entry name" value="Nucleic acid-binding proteins"/>
    <property type="match status" value="1"/>
</dbReference>
<dbReference type="PROSITE" id="PS00055">
    <property type="entry name" value="RIBOSOMAL_S12"/>
    <property type="match status" value="1"/>
</dbReference>